<name>LE193_HORVU</name>
<comment type="function">
    <text>Lea proteins are late embryonic proteins abundant in higher plant seed embryos.</text>
</comment>
<comment type="induction">
    <text>By abscisic acid (ABA) and osmotic stress.</text>
</comment>
<comment type="similarity">
    <text evidence="2">Belongs to the small hydrophilic plant seed protein family.</text>
</comment>
<sequence length="133" mass="14605">MASGQQERSELDRMAREGETVVPGGTGGKTLEAQEHLAEGRSRGGQTRKDQLGEEGYREMGHKGGETRKEQLGEEGYREMGHKGGETRKEQMGEEGYHEMGRKGGLSTMEESGGERAAREGIDIDESKFKTKS</sequence>
<organism>
    <name type="scientific">Hordeum vulgare</name>
    <name type="common">Barley</name>
    <dbReference type="NCBI Taxonomy" id="4513"/>
    <lineage>
        <taxon>Eukaryota</taxon>
        <taxon>Viridiplantae</taxon>
        <taxon>Streptophyta</taxon>
        <taxon>Embryophyta</taxon>
        <taxon>Tracheophyta</taxon>
        <taxon>Spermatophyta</taxon>
        <taxon>Magnoliopsida</taxon>
        <taxon>Liliopsida</taxon>
        <taxon>Poales</taxon>
        <taxon>Poaceae</taxon>
        <taxon>BOP clade</taxon>
        <taxon>Pooideae</taxon>
        <taxon>Triticodae</taxon>
        <taxon>Triticeae</taxon>
        <taxon>Hordeinae</taxon>
        <taxon>Hordeum</taxon>
    </lineage>
</organism>
<evidence type="ECO:0000256" key="1">
    <source>
        <dbReference type="SAM" id="MobiDB-lite"/>
    </source>
</evidence>
<evidence type="ECO:0000305" key="2"/>
<dbReference type="EMBL" id="X62805">
    <property type="protein sequence ID" value="CAA44623.1"/>
    <property type="molecule type" value="mRNA"/>
</dbReference>
<dbReference type="EMBL" id="X65951">
    <property type="protein sequence ID" value="CAA46769.1"/>
    <property type="molecule type" value="Genomic_DNA"/>
</dbReference>
<dbReference type="EMBL" id="X65952">
    <property type="protein sequence ID" value="CAA46770.1"/>
    <property type="molecule type" value="Genomic_DNA"/>
</dbReference>
<dbReference type="PIR" id="S36751">
    <property type="entry name" value="S36751"/>
</dbReference>
<dbReference type="ExpressionAtlas" id="Q02400">
    <property type="expression patterns" value="baseline and differential"/>
</dbReference>
<dbReference type="GO" id="GO:0005829">
    <property type="term" value="C:cytosol"/>
    <property type="evidence" value="ECO:0007669"/>
    <property type="project" value="TreeGrafter"/>
</dbReference>
<dbReference type="GO" id="GO:0009737">
    <property type="term" value="P:response to abscisic acid"/>
    <property type="evidence" value="ECO:0007669"/>
    <property type="project" value="TreeGrafter"/>
</dbReference>
<dbReference type="InterPro" id="IPR038956">
    <property type="entry name" value="LEA_5"/>
</dbReference>
<dbReference type="InterPro" id="IPR022377">
    <property type="entry name" value="Sm_Hydphi_plant_seed_CS"/>
</dbReference>
<dbReference type="InterPro" id="IPR000389">
    <property type="entry name" value="Small_hydrophilic_seed_prot"/>
</dbReference>
<dbReference type="PANTHER" id="PTHR34671">
    <property type="entry name" value="EM-LIKE PROTEIN GEA1"/>
    <property type="match status" value="1"/>
</dbReference>
<dbReference type="PANTHER" id="PTHR34671:SF19">
    <property type="entry name" value="EMBRYONIC ABUNDANT PROTEIN 1"/>
    <property type="match status" value="1"/>
</dbReference>
<dbReference type="Pfam" id="PF00477">
    <property type="entry name" value="LEA_5"/>
    <property type="match status" value="1"/>
</dbReference>
<dbReference type="PROSITE" id="PS00431">
    <property type="entry name" value="SMALL_HYDR_PLANT_SEED"/>
    <property type="match status" value="1"/>
</dbReference>
<keyword id="KW-0677">Repeat</keyword>
<keyword id="KW-0346">Stress response</keyword>
<reference key="1">
    <citation type="journal article" date="1992" name="Plant J.">
        <title>Late embryogenesis-abundant genes encoding proteins with different numbers of hydrophilic repeats are regulated differentially by abscisic acid and osmotic stress.</title>
        <authorList>
            <person name="Espelund M."/>
            <person name="Saeboe-Larssen S."/>
            <person name="Hughes D.W."/>
            <person name="Galau G.A."/>
            <person name="Larsen F."/>
            <person name="Jakobsen K.S."/>
        </authorList>
    </citation>
    <scope>NUCLEOTIDE SEQUENCE [MRNA]</scope>
    <source>
        <strain>cv. Bomi</strain>
        <tissue>Embryo</tissue>
    </source>
</reference>
<reference key="2">
    <citation type="journal article" date="1992" name="BioTechniques">
        <title>Cloning and direct sequencing of plant promoters using primer-adapter mediated PCR on DNA coupled to a magnetic solid phase.</title>
        <authorList>
            <person name="Espelund M."/>
            <person name="Jakobsen K.S."/>
        </authorList>
    </citation>
    <scope>NUCLEOTIDE SEQUENCE [GENOMIC DNA] OF 1-8</scope>
    <source>
        <strain>cv. Bomi</strain>
        <tissue>Leaf</tissue>
    </source>
</reference>
<protein>
    <recommendedName>
        <fullName>Late embryogenesis abundant protein B19.3</fullName>
        <shortName>LEA B19.3</shortName>
    </recommendedName>
</protein>
<proteinExistence type="evidence at transcript level"/>
<gene>
    <name type="primary">B19.3</name>
</gene>
<accession>Q02400</accession>
<feature type="chain" id="PRO_0000185683" description="Late embryogenesis abundant protein B19.3">
    <location>
        <begin position="1"/>
        <end position="133"/>
    </location>
</feature>
<feature type="repeat" description="1">
    <location>
        <begin position="24"/>
        <end position="43"/>
    </location>
</feature>
<feature type="repeat" description="2">
    <location>
        <begin position="44"/>
        <end position="63"/>
    </location>
</feature>
<feature type="repeat" description="3">
    <location>
        <begin position="64"/>
        <end position="83"/>
    </location>
</feature>
<feature type="region of interest" description="Disordered" evidence="1">
    <location>
        <begin position="1"/>
        <end position="133"/>
    </location>
</feature>
<feature type="region of interest" description="3 X 20 AA tandem repeats">
    <location>
        <begin position="24"/>
        <end position="83"/>
    </location>
</feature>
<feature type="compositionally biased region" description="Basic and acidic residues" evidence="1">
    <location>
        <begin position="7"/>
        <end position="19"/>
    </location>
</feature>
<feature type="compositionally biased region" description="Basic and acidic residues" evidence="1">
    <location>
        <begin position="32"/>
        <end position="102"/>
    </location>
</feature>
<feature type="compositionally biased region" description="Basic and acidic residues" evidence="1">
    <location>
        <begin position="113"/>
        <end position="133"/>
    </location>
</feature>